<protein>
    <recommendedName>
        <fullName evidence="1">Large ribosomal subunit protein uL2</fullName>
    </recommendedName>
    <alternativeName>
        <fullName evidence="3">50S ribosomal protein L2</fullName>
    </alternativeName>
</protein>
<gene>
    <name evidence="1" type="primary">rplB</name>
    <name type="ordered locus">Fphi_0583</name>
</gene>
<reference key="1">
    <citation type="submission" date="2007-12" db="EMBL/GenBank/DDBJ databases">
        <title>Complete sequence of chromosome of Francisella philomiragia subsp. philomiragia ATCC 25017.</title>
        <authorList>
            <consortium name="US DOE Joint Genome Institute"/>
            <person name="Copeland A."/>
            <person name="Lucas S."/>
            <person name="Lapidus A."/>
            <person name="Barry K."/>
            <person name="Detter J.C."/>
            <person name="Glavina del Rio T."/>
            <person name="Hammon N."/>
            <person name="Israni S."/>
            <person name="Dalin E."/>
            <person name="Tice H."/>
            <person name="Pitluck S."/>
            <person name="Chain P."/>
            <person name="Malfatti S."/>
            <person name="Shin M."/>
            <person name="Vergez L."/>
            <person name="Schmutz J."/>
            <person name="Larimer F."/>
            <person name="Land M."/>
            <person name="Hauser L."/>
            <person name="Richardson P."/>
        </authorList>
    </citation>
    <scope>NUCLEOTIDE SEQUENCE [LARGE SCALE GENOMIC DNA]</scope>
    <source>
        <strain>ATCC 25017 / CCUG 19701 / FSC 153 / O#319-036</strain>
    </source>
</reference>
<name>RL2_FRAP2</name>
<sequence length="274" mass="30385">MIEIKKAKPTSPGRRHVVSVKNTELHTGKPFKGLVEVKKSKAGRNNTGRITVRHQGGGHKQHYRIVDFKRNKDDIVARVERIEYDPNRSANIALVLYADGERRYIIAPKGLKKDMSVVSGEKVDVAVGNCMPLRNIPLGTVIHNIEMKPKKGAQMIRSAGTFAQLVGKDNAYAIIRLRSGEMRRVLLDCRAVIGVVSNSEHNLKSLGKAGAKRWRGIRPTVRGVAMNPVDHPHGGGEGRTSGGRHPVTPWGIPTKGYKTRKNKRSNKLIVQKRK</sequence>
<organism>
    <name type="scientific">Francisella philomiragia subsp. philomiragia (strain ATCC 25017 / CCUG 19701 / FSC 153 / O#319-036)</name>
    <dbReference type="NCBI Taxonomy" id="484022"/>
    <lineage>
        <taxon>Bacteria</taxon>
        <taxon>Pseudomonadati</taxon>
        <taxon>Pseudomonadota</taxon>
        <taxon>Gammaproteobacteria</taxon>
        <taxon>Thiotrichales</taxon>
        <taxon>Francisellaceae</taxon>
        <taxon>Francisella</taxon>
    </lineage>
</organism>
<feature type="chain" id="PRO_1000086331" description="Large ribosomal subunit protein uL2">
    <location>
        <begin position="1"/>
        <end position="274"/>
    </location>
</feature>
<feature type="region of interest" description="Disordered" evidence="2">
    <location>
        <begin position="224"/>
        <end position="274"/>
    </location>
</feature>
<feature type="compositionally biased region" description="Basic residues" evidence="2">
    <location>
        <begin position="257"/>
        <end position="274"/>
    </location>
</feature>
<dbReference type="EMBL" id="CP000937">
    <property type="protein sequence ID" value="ABZ86802.1"/>
    <property type="molecule type" value="Genomic_DNA"/>
</dbReference>
<dbReference type="SMR" id="B0U0Y6"/>
<dbReference type="KEGG" id="fph:Fphi_0583"/>
<dbReference type="eggNOG" id="COG0090">
    <property type="taxonomic scope" value="Bacteria"/>
</dbReference>
<dbReference type="HOGENOM" id="CLU_036235_2_1_6"/>
<dbReference type="GO" id="GO:0015934">
    <property type="term" value="C:large ribosomal subunit"/>
    <property type="evidence" value="ECO:0007669"/>
    <property type="project" value="InterPro"/>
</dbReference>
<dbReference type="GO" id="GO:0019843">
    <property type="term" value="F:rRNA binding"/>
    <property type="evidence" value="ECO:0007669"/>
    <property type="project" value="UniProtKB-UniRule"/>
</dbReference>
<dbReference type="GO" id="GO:0003735">
    <property type="term" value="F:structural constituent of ribosome"/>
    <property type="evidence" value="ECO:0007669"/>
    <property type="project" value="InterPro"/>
</dbReference>
<dbReference type="GO" id="GO:0016740">
    <property type="term" value="F:transferase activity"/>
    <property type="evidence" value="ECO:0007669"/>
    <property type="project" value="InterPro"/>
</dbReference>
<dbReference type="GO" id="GO:0002181">
    <property type="term" value="P:cytoplasmic translation"/>
    <property type="evidence" value="ECO:0007669"/>
    <property type="project" value="TreeGrafter"/>
</dbReference>
<dbReference type="FunFam" id="2.30.30.30:FF:000001">
    <property type="entry name" value="50S ribosomal protein L2"/>
    <property type="match status" value="1"/>
</dbReference>
<dbReference type="FunFam" id="2.40.50.140:FF:000003">
    <property type="entry name" value="50S ribosomal protein L2"/>
    <property type="match status" value="1"/>
</dbReference>
<dbReference type="FunFam" id="4.10.950.10:FF:000001">
    <property type="entry name" value="50S ribosomal protein L2"/>
    <property type="match status" value="1"/>
</dbReference>
<dbReference type="Gene3D" id="2.30.30.30">
    <property type="match status" value="1"/>
</dbReference>
<dbReference type="Gene3D" id="2.40.50.140">
    <property type="entry name" value="Nucleic acid-binding proteins"/>
    <property type="match status" value="1"/>
</dbReference>
<dbReference type="Gene3D" id="4.10.950.10">
    <property type="entry name" value="Ribosomal protein L2, domain 3"/>
    <property type="match status" value="1"/>
</dbReference>
<dbReference type="HAMAP" id="MF_01320_B">
    <property type="entry name" value="Ribosomal_uL2_B"/>
    <property type="match status" value="1"/>
</dbReference>
<dbReference type="InterPro" id="IPR012340">
    <property type="entry name" value="NA-bd_OB-fold"/>
</dbReference>
<dbReference type="InterPro" id="IPR014722">
    <property type="entry name" value="Rib_uL2_dom2"/>
</dbReference>
<dbReference type="InterPro" id="IPR002171">
    <property type="entry name" value="Ribosomal_uL2"/>
</dbReference>
<dbReference type="InterPro" id="IPR005880">
    <property type="entry name" value="Ribosomal_uL2_bac/org-type"/>
</dbReference>
<dbReference type="InterPro" id="IPR022669">
    <property type="entry name" value="Ribosomal_uL2_C"/>
</dbReference>
<dbReference type="InterPro" id="IPR022671">
    <property type="entry name" value="Ribosomal_uL2_CS"/>
</dbReference>
<dbReference type="InterPro" id="IPR014726">
    <property type="entry name" value="Ribosomal_uL2_dom3"/>
</dbReference>
<dbReference type="InterPro" id="IPR022666">
    <property type="entry name" value="Ribosomal_uL2_RNA-bd_dom"/>
</dbReference>
<dbReference type="InterPro" id="IPR008991">
    <property type="entry name" value="Translation_prot_SH3-like_sf"/>
</dbReference>
<dbReference type="NCBIfam" id="TIGR01171">
    <property type="entry name" value="rplB_bact"/>
    <property type="match status" value="1"/>
</dbReference>
<dbReference type="PANTHER" id="PTHR13691:SF5">
    <property type="entry name" value="LARGE RIBOSOMAL SUBUNIT PROTEIN UL2M"/>
    <property type="match status" value="1"/>
</dbReference>
<dbReference type="PANTHER" id="PTHR13691">
    <property type="entry name" value="RIBOSOMAL PROTEIN L2"/>
    <property type="match status" value="1"/>
</dbReference>
<dbReference type="Pfam" id="PF00181">
    <property type="entry name" value="Ribosomal_L2"/>
    <property type="match status" value="1"/>
</dbReference>
<dbReference type="Pfam" id="PF03947">
    <property type="entry name" value="Ribosomal_L2_C"/>
    <property type="match status" value="1"/>
</dbReference>
<dbReference type="PIRSF" id="PIRSF002158">
    <property type="entry name" value="Ribosomal_L2"/>
    <property type="match status" value="1"/>
</dbReference>
<dbReference type="SMART" id="SM01383">
    <property type="entry name" value="Ribosomal_L2"/>
    <property type="match status" value="1"/>
</dbReference>
<dbReference type="SMART" id="SM01382">
    <property type="entry name" value="Ribosomal_L2_C"/>
    <property type="match status" value="1"/>
</dbReference>
<dbReference type="SUPFAM" id="SSF50249">
    <property type="entry name" value="Nucleic acid-binding proteins"/>
    <property type="match status" value="1"/>
</dbReference>
<dbReference type="SUPFAM" id="SSF50104">
    <property type="entry name" value="Translation proteins SH3-like domain"/>
    <property type="match status" value="1"/>
</dbReference>
<dbReference type="PROSITE" id="PS00467">
    <property type="entry name" value="RIBOSOMAL_L2"/>
    <property type="match status" value="1"/>
</dbReference>
<proteinExistence type="inferred from homology"/>
<accession>B0U0Y6</accession>
<evidence type="ECO:0000255" key="1">
    <source>
        <dbReference type="HAMAP-Rule" id="MF_01320"/>
    </source>
</evidence>
<evidence type="ECO:0000256" key="2">
    <source>
        <dbReference type="SAM" id="MobiDB-lite"/>
    </source>
</evidence>
<evidence type="ECO:0000305" key="3"/>
<comment type="function">
    <text evidence="1">One of the primary rRNA binding proteins. Required for association of the 30S and 50S subunits to form the 70S ribosome, for tRNA binding and peptide bond formation. It has been suggested to have peptidyltransferase activity; this is somewhat controversial. Makes several contacts with the 16S rRNA in the 70S ribosome.</text>
</comment>
<comment type="subunit">
    <text evidence="1">Part of the 50S ribosomal subunit. Forms a bridge to the 30S subunit in the 70S ribosome.</text>
</comment>
<comment type="similarity">
    <text evidence="1">Belongs to the universal ribosomal protein uL2 family.</text>
</comment>
<keyword id="KW-0687">Ribonucleoprotein</keyword>
<keyword id="KW-0689">Ribosomal protein</keyword>
<keyword id="KW-0694">RNA-binding</keyword>
<keyword id="KW-0699">rRNA-binding</keyword>